<protein>
    <recommendedName>
        <fullName>Flagellin B1</fullName>
    </recommendedName>
</protein>
<accession>P27803</accession>
<accession>P17602</accession>
<name>FLAB1_METVO</name>
<feature type="propeptide" id="PRO_0000009387" evidence="2">
    <location>
        <begin position="1"/>
        <end position="12"/>
    </location>
</feature>
<feature type="chain" id="PRO_0000009388" description="Flagellin B1">
    <location>
        <begin position="13"/>
        <end position="218"/>
    </location>
</feature>
<feature type="glycosylation site" description="N-linked (GlcNAc...) asparagine" evidence="1">
    <location>
        <position position="38"/>
    </location>
</feature>
<feature type="glycosylation site" description="N-linked (GlcNAc...) asparagine" evidence="1">
    <location>
        <position position="71"/>
    </location>
</feature>
<feature type="glycosylation site" description="N-linked (GlcNAc...) asparagine" evidence="1">
    <location>
        <position position="77"/>
    </location>
</feature>
<feature type="glycosylation site" description="N-linked (GlcNAc...) asparagine" evidence="1">
    <location>
        <position position="115"/>
    </location>
</feature>
<feature type="glycosylation site" description="N-linked (GlcNAc...) asparagine" evidence="1">
    <location>
        <position position="136"/>
    </location>
</feature>
<dbReference type="EMBL" id="M72148">
    <property type="protein sequence ID" value="AAA73074.1"/>
    <property type="molecule type" value="Genomic_DNA"/>
</dbReference>
<dbReference type="PIR" id="B41316">
    <property type="entry name" value="B41316"/>
</dbReference>
<dbReference type="SMR" id="P27803"/>
<dbReference type="GlyCosmos" id="P27803">
    <property type="glycosylation" value="5 sites, No reported glycans"/>
</dbReference>
<dbReference type="iPTMnet" id="P27803"/>
<dbReference type="GO" id="GO:0097589">
    <property type="term" value="C:archaeal-type flagellum"/>
    <property type="evidence" value="ECO:0007669"/>
    <property type="project" value="UniProtKB-SubCell"/>
</dbReference>
<dbReference type="GO" id="GO:0005198">
    <property type="term" value="F:structural molecule activity"/>
    <property type="evidence" value="ECO:0007669"/>
    <property type="project" value="InterPro"/>
</dbReference>
<dbReference type="GO" id="GO:0097588">
    <property type="term" value="P:archaeal or bacterial-type flagellum-dependent cell motility"/>
    <property type="evidence" value="ECO:0007669"/>
    <property type="project" value="InterPro"/>
</dbReference>
<dbReference type="InterPro" id="IPR013373">
    <property type="entry name" value="Flagellin/pilin_N_arc"/>
</dbReference>
<dbReference type="InterPro" id="IPR002774">
    <property type="entry name" value="Flagellin_arc"/>
</dbReference>
<dbReference type="NCBIfam" id="TIGR02537">
    <property type="entry name" value="arch_flag_Nterm"/>
    <property type="match status" value="1"/>
</dbReference>
<dbReference type="NCBIfam" id="NF006325">
    <property type="entry name" value="PRK08541.1"/>
    <property type="match status" value="1"/>
</dbReference>
<dbReference type="PANTHER" id="PTHR35903">
    <property type="entry name" value="FLAGELLIN B1"/>
    <property type="match status" value="1"/>
</dbReference>
<dbReference type="PANTHER" id="PTHR35903:SF1">
    <property type="entry name" value="FLAGELLIN B1"/>
    <property type="match status" value="1"/>
</dbReference>
<dbReference type="Pfam" id="PF01917">
    <property type="entry name" value="Arch_flagellin"/>
    <property type="match status" value="1"/>
</dbReference>
<gene>
    <name type="primary">flaB1</name>
</gene>
<comment type="function">
    <text>Flagellin is the subunit protein which polymerizes to form the filaments of archaeal flagella.</text>
</comment>
<comment type="subcellular location">
    <subcellularLocation>
        <location>Archaeal flagellum</location>
    </subcellularLocation>
</comment>
<comment type="PTM">
    <text evidence="1">N-linked glycans consist of the 779 Da trisaccharide beta-ManNAc(Thr)-(1-4)-beta-GlcNAc3NAcA-(1-3)-beta-GlcNAc.</text>
</comment>
<comment type="similarity">
    <text evidence="3">Belongs to the archaeal flagellin family.</text>
</comment>
<evidence type="ECO:0000269" key="1">
    <source>
    </source>
</evidence>
<evidence type="ECO:0000269" key="2">
    <source>
    </source>
</evidence>
<evidence type="ECO:0000305" key="3"/>
<organism>
    <name type="scientific">Methanococcus voltae</name>
    <dbReference type="NCBI Taxonomy" id="2188"/>
    <lineage>
        <taxon>Archaea</taxon>
        <taxon>Methanobacteriati</taxon>
        <taxon>Methanobacteriota</taxon>
        <taxon>Methanomada group</taxon>
        <taxon>Methanococci</taxon>
        <taxon>Methanococcales</taxon>
        <taxon>Methanococcaceae</taxon>
        <taxon>Methanococcus</taxon>
    </lineage>
</organism>
<sequence length="218" mass="22514">MNIKEFLSNKKGASGIGTLIVFIAMVLVAAVAASVLINTSGFLQQKASTTGKESTEQVASGLQVTGVTGVNSTDSENITHIVAYITPKAGSSAIDLSQAKLFVTYNGVSAVLKANESAIDGTSGTPDVLSATLLSNTSATEYQVVSLQDFDGSVAKNQVINKGDLVAIRISTGQVFSSTKGIPTRAHVSGKLQPEFGAPGIIEFTTPATFTTKVVELQ</sequence>
<proteinExistence type="evidence at protein level"/>
<reference key="1">
    <citation type="journal article" date="1991" name="J. Bacteriol.">
        <title>Cloning and sequencing of a multigene family encoding the flagellins of Methanococcus voltae.</title>
        <authorList>
            <person name="Kalmokoff M.L."/>
            <person name="Jarrell K.F."/>
        </authorList>
    </citation>
    <scope>NUCLEOTIDE SEQUENCE [GENOMIC DNA]</scope>
    <source>
        <strain>ATCC 33273 / DSM 1537 / NBRC 100457 / OCM 70 / PS</strain>
    </source>
</reference>
<reference key="2">
    <citation type="journal article" date="1990" name="Biochem. Biophys. Res. Commun.">
        <title>Conserved N-terminal sequences in the flagellins of archaebacteria.</title>
        <authorList>
            <person name="Kalmokoff M.L."/>
            <person name="Karnauchow T.M."/>
            <person name="Jarrell K.F."/>
        </authorList>
    </citation>
    <scope>PROTEIN SEQUENCE OF 13-32</scope>
    <source>
        <strain>ATCC 33273 / DSM 1537 / NBRC 100457 / OCM 70 / PS</strain>
    </source>
</reference>
<reference key="3">
    <citation type="journal article" date="2005" name="J. Biol. Chem.">
        <title>Identification and characterization of the unique N-linked glycan common to the flagellins and S-layer glycoprotein of Methanococcus voltae.</title>
        <authorList>
            <person name="Voisin S."/>
            <person name="Houliston R.S."/>
            <person name="Kelly J."/>
            <person name="Brisson J.-R."/>
            <person name="Watson D."/>
            <person name="Bardy S.L."/>
            <person name="Jarrell K.F."/>
            <person name="Logan S.M."/>
        </authorList>
    </citation>
    <scope>GLYCOSYLATION AT ASN-38; ASN-71; ASN-77; ASN-115 AND ASN-136</scope>
    <scope>GLYCAN STRUCTURE</scope>
    <scope>IDENTIFICATION BY MASS SPECTROMETRY</scope>
    <source>
        <strain>ATCC 33273 / DSM 1537 / NBRC 100457 / OCM 70 / PS</strain>
    </source>
</reference>
<keyword id="KW-0974">Archaeal flagellum</keyword>
<keyword id="KW-0903">Direct protein sequencing</keyword>
<keyword id="KW-0325">Glycoprotein</keyword>